<accession>B5ZRD6</accession>
<keyword id="KW-0067">ATP-binding</keyword>
<keyword id="KW-0143">Chaperone</keyword>
<keyword id="KW-0963">Cytoplasm</keyword>
<keyword id="KW-0413">Isomerase</keyword>
<keyword id="KW-0547">Nucleotide-binding</keyword>
<keyword id="KW-1185">Reference proteome</keyword>
<gene>
    <name evidence="1" type="primary">groEL</name>
    <name evidence="1" type="synonym">groL</name>
    <name type="ordered locus">Rleg2_0470</name>
</gene>
<sequence length="547" mass="57902">MASKEIKFGRTAREKMLRGVDILADAVKVTLGPKGRNVIIDKSFGAPRITKDGVSVAKEIELEDKFENMGAQMVREVASKTNDIAGDGTTTATVLAQAIVREGNKAVAAGMNPMDLKRGIDLAVADVVKDLQAKAKKISTSEEVAQVGTISANGDKQVGLDIAEAMQKVGNEGVITVEEAKTAETELEVVEGMQFDRGYLSPYFVTNPEKMIADLEDVFILLHEKKLSNLQSMLPVLEAVVQTGKPLLIIAEDVEGEALATLVVNKLRGGLKIAAVKAPGFGDRRKAMLEDIAILTGGTVISEDLGIKLESVTLDMLGRAKKVSISKENTTIVDGSGAKSDIEGRVAQIKAQIEETTSDYDREKLQERLAKLAGGVAVIRVGGSTEVEVKEKKDRIDDALNATRAAVQEGIVPGGGIALLRSSTKITVKGANDDQEAGINIVRRALQSLVRQIAENAGDEASIVVGKVLDKNEDNYGYNAQTSEFGDMIAMGIVDPLKVVRTALQNAASVASLLITTEAMIAELPKKESAGGGMPGGMGGMGGMDMM</sequence>
<protein>
    <recommendedName>
        <fullName evidence="1">Chaperonin GroEL</fullName>
        <ecNumber evidence="1">5.6.1.7</ecNumber>
    </recommendedName>
    <alternativeName>
        <fullName evidence="1">60 kDa chaperonin</fullName>
    </alternativeName>
    <alternativeName>
        <fullName evidence="1">Chaperonin-60</fullName>
        <shortName evidence="1">Cpn60</shortName>
    </alternativeName>
</protein>
<organism>
    <name type="scientific">Rhizobium leguminosarum bv. trifolii (strain WSM2304)</name>
    <dbReference type="NCBI Taxonomy" id="395492"/>
    <lineage>
        <taxon>Bacteria</taxon>
        <taxon>Pseudomonadati</taxon>
        <taxon>Pseudomonadota</taxon>
        <taxon>Alphaproteobacteria</taxon>
        <taxon>Hyphomicrobiales</taxon>
        <taxon>Rhizobiaceae</taxon>
        <taxon>Rhizobium/Agrobacterium group</taxon>
        <taxon>Rhizobium</taxon>
    </lineage>
</organism>
<dbReference type="EC" id="5.6.1.7" evidence="1"/>
<dbReference type="EMBL" id="CP001191">
    <property type="protein sequence ID" value="ACI53768.1"/>
    <property type="molecule type" value="Genomic_DNA"/>
</dbReference>
<dbReference type="RefSeq" id="WP_003584509.1">
    <property type="nucleotide sequence ID" value="NC_011369.1"/>
</dbReference>
<dbReference type="SMR" id="B5ZRD6"/>
<dbReference type="STRING" id="395492.Rleg2_0470"/>
<dbReference type="KEGG" id="rlt:Rleg2_0470"/>
<dbReference type="eggNOG" id="COG0459">
    <property type="taxonomic scope" value="Bacteria"/>
</dbReference>
<dbReference type="HOGENOM" id="CLU_016503_3_0_5"/>
<dbReference type="Proteomes" id="UP000008330">
    <property type="component" value="Chromosome"/>
</dbReference>
<dbReference type="GO" id="GO:0005737">
    <property type="term" value="C:cytoplasm"/>
    <property type="evidence" value="ECO:0007669"/>
    <property type="project" value="UniProtKB-SubCell"/>
</dbReference>
<dbReference type="GO" id="GO:0005524">
    <property type="term" value="F:ATP binding"/>
    <property type="evidence" value="ECO:0007669"/>
    <property type="project" value="UniProtKB-UniRule"/>
</dbReference>
<dbReference type="GO" id="GO:0140662">
    <property type="term" value="F:ATP-dependent protein folding chaperone"/>
    <property type="evidence" value="ECO:0007669"/>
    <property type="project" value="InterPro"/>
</dbReference>
<dbReference type="GO" id="GO:0016853">
    <property type="term" value="F:isomerase activity"/>
    <property type="evidence" value="ECO:0007669"/>
    <property type="project" value="UniProtKB-KW"/>
</dbReference>
<dbReference type="GO" id="GO:0051082">
    <property type="term" value="F:unfolded protein binding"/>
    <property type="evidence" value="ECO:0007669"/>
    <property type="project" value="UniProtKB-UniRule"/>
</dbReference>
<dbReference type="GO" id="GO:0042026">
    <property type="term" value="P:protein refolding"/>
    <property type="evidence" value="ECO:0007669"/>
    <property type="project" value="UniProtKB-UniRule"/>
</dbReference>
<dbReference type="CDD" id="cd03344">
    <property type="entry name" value="GroEL"/>
    <property type="match status" value="1"/>
</dbReference>
<dbReference type="FunFam" id="1.10.560.10:FF:000001">
    <property type="entry name" value="60 kDa chaperonin"/>
    <property type="match status" value="1"/>
</dbReference>
<dbReference type="FunFam" id="3.50.7.10:FF:000001">
    <property type="entry name" value="60 kDa chaperonin"/>
    <property type="match status" value="1"/>
</dbReference>
<dbReference type="Gene3D" id="3.50.7.10">
    <property type="entry name" value="GroEL"/>
    <property type="match status" value="1"/>
</dbReference>
<dbReference type="Gene3D" id="1.10.560.10">
    <property type="entry name" value="GroEL-like equatorial domain"/>
    <property type="match status" value="1"/>
</dbReference>
<dbReference type="Gene3D" id="3.30.260.10">
    <property type="entry name" value="TCP-1-like chaperonin intermediate domain"/>
    <property type="match status" value="1"/>
</dbReference>
<dbReference type="HAMAP" id="MF_00600">
    <property type="entry name" value="CH60"/>
    <property type="match status" value="1"/>
</dbReference>
<dbReference type="InterPro" id="IPR018370">
    <property type="entry name" value="Chaperonin_Cpn60_CS"/>
</dbReference>
<dbReference type="InterPro" id="IPR001844">
    <property type="entry name" value="Cpn60/GroEL"/>
</dbReference>
<dbReference type="InterPro" id="IPR002423">
    <property type="entry name" value="Cpn60/GroEL/TCP-1"/>
</dbReference>
<dbReference type="InterPro" id="IPR027409">
    <property type="entry name" value="GroEL-like_apical_dom_sf"/>
</dbReference>
<dbReference type="InterPro" id="IPR027413">
    <property type="entry name" value="GROEL-like_equatorial_sf"/>
</dbReference>
<dbReference type="InterPro" id="IPR027410">
    <property type="entry name" value="TCP-1-like_intermed_sf"/>
</dbReference>
<dbReference type="NCBIfam" id="TIGR02348">
    <property type="entry name" value="GroEL"/>
    <property type="match status" value="1"/>
</dbReference>
<dbReference type="NCBIfam" id="NF000592">
    <property type="entry name" value="PRK00013.1"/>
    <property type="match status" value="1"/>
</dbReference>
<dbReference type="NCBIfam" id="NF009487">
    <property type="entry name" value="PRK12849.1"/>
    <property type="match status" value="1"/>
</dbReference>
<dbReference type="NCBIfam" id="NF009488">
    <property type="entry name" value="PRK12850.1"/>
    <property type="match status" value="1"/>
</dbReference>
<dbReference type="NCBIfam" id="NF009489">
    <property type="entry name" value="PRK12851.1"/>
    <property type="match status" value="1"/>
</dbReference>
<dbReference type="PANTHER" id="PTHR45633">
    <property type="entry name" value="60 KDA HEAT SHOCK PROTEIN, MITOCHONDRIAL"/>
    <property type="match status" value="1"/>
</dbReference>
<dbReference type="Pfam" id="PF00118">
    <property type="entry name" value="Cpn60_TCP1"/>
    <property type="match status" value="1"/>
</dbReference>
<dbReference type="PRINTS" id="PR00298">
    <property type="entry name" value="CHAPERONIN60"/>
</dbReference>
<dbReference type="SUPFAM" id="SSF52029">
    <property type="entry name" value="GroEL apical domain-like"/>
    <property type="match status" value="1"/>
</dbReference>
<dbReference type="SUPFAM" id="SSF48592">
    <property type="entry name" value="GroEL equatorial domain-like"/>
    <property type="match status" value="1"/>
</dbReference>
<dbReference type="SUPFAM" id="SSF54849">
    <property type="entry name" value="GroEL-intermediate domain like"/>
    <property type="match status" value="1"/>
</dbReference>
<dbReference type="PROSITE" id="PS00296">
    <property type="entry name" value="CHAPERONINS_CPN60"/>
    <property type="match status" value="1"/>
</dbReference>
<comment type="function">
    <text evidence="1">Together with its co-chaperonin GroES, plays an essential role in assisting protein folding. The GroEL-GroES system forms a nano-cage that allows encapsulation of the non-native substrate proteins and provides a physical environment optimized to promote and accelerate protein folding.</text>
</comment>
<comment type="catalytic activity">
    <reaction evidence="1">
        <text>ATP + H2O + a folded polypeptide = ADP + phosphate + an unfolded polypeptide.</text>
        <dbReference type="EC" id="5.6.1.7"/>
    </reaction>
</comment>
<comment type="subunit">
    <text evidence="1">Forms a cylinder of 14 subunits composed of two heptameric rings stacked back-to-back. Interacts with the co-chaperonin GroES.</text>
</comment>
<comment type="subcellular location">
    <subcellularLocation>
        <location evidence="1">Cytoplasm</location>
    </subcellularLocation>
</comment>
<comment type="similarity">
    <text evidence="1">Belongs to the chaperonin (HSP60) family.</text>
</comment>
<proteinExistence type="inferred from homology"/>
<feature type="chain" id="PRO_1000130049" description="Chaperonin GroEL">
    <location>
        <begin position="1"/>
        <end position="547"/>
    </location>
</feature>
<feature type="binding site" evidence="1">
    <location>
        <begin position="30"/>
        <end position="33"/>
    </location>
    <ligand>
        <name>ATP</name>
        <dbReference type="ChEBI" id="CHEBI:30616"/>
    </ligand>
</feature>
<feature type="binding site" evidence="1">
    <location>
        <position position="51"/>
    </location>
    <ligand>
        <name>ATP</name>
        <dbReference type="ChEBI" id="CHEBI:30616"/>
    </ligand>
</feature>
<feature type="binding site" evidence="1">
    <location>
        <begin position="87"/>
        <end position="91"/>
    </location>
    <ligand>
        <name>ATP</name>
        <dbReference type="ChEBI" id="CHEBI:30616"/>
    </ligand>
</feature>
<feature type="binding site" evidence="1">
    <location>
        <position position="415"/>
    </location>
    <ligand>
        <name>ATP</name>
        <dbReference type="ChEBI" id="CHEBI:30616"/>
    </ligand>
</feature>
<feature type="binding site" evidence="1">
    <location>
        <position position="495"/>
    </location>
    <ligand>
        <name>ATP</name>
        <dbReference type="ChEBI" id="CHEBI:30616"/>
    </ligand>
</feature>
<reference key="1">
    <citation type="journal article" date="2010" name="Stand. Genomic Sci.">
        <title>Complete genome sequence of Rhizobium leguminosarum bv trifolii strain WSM2304, an effective microsymbiont of the South American clover Trifolium polymorphum.</title>
        <authorList>
            <person name="Reeve W."/>
            <person name="O'Hara G."/>
            <person name="Chain P."/>
            <person name="Ardley J."/>
            <person name="Brau L."/>
            <person name="Nandesena K."/>
            <person name="Tiwari R."/>
            <person name="Malfatti S."/>
            <person name="Kiss H."/>
            <person name="Lapidus A."/>
            <person name="Copeland A."/>
            <person name="Nolan M."/>
            <person name="Land M."/>
            <person name="Ivanova N."/>
            <person name="Mavromatis K."/>
            <person name="Markowitz V."/>
            <person name="Kyrpides N."/>
            <person name="Melino V."/>
            <person name="Denton M."/>
            <person name="Yates R."/>
            <person name="Howieson J."/>
        </authorList>
    </citation>
    <scope>NUCLEOTIDE SEQUENCE [LARGE SCALE GENOMIC DNA]</scope>
    <source>
        <strain>WSM2304</strain>
    </source>
</reference>
<name>CH60_RHILW</name>
<evidence type="ECO:0000255" key="1">
    <source>
        <dbReference type="HAMAP-Rule" id="MF_00600"/>
    </source>
</evidence>